<feature type="signal peptide" evidence="2">
    <location>
        <begin position="1"/>
        <end position="20"/>
    </location>
</feature>
<feature type="chain" id="PRO_0000392576" description="Anterior gradient protein 1" evidence="2">
    <location>
        <begin position="21"/>
        <end position="187"/>
    </location>
</feature>
<protein>
    <recommendedName>
        <fullName>Anterior gradient protein 1</fullName>
    </recommendedName>
</protein>
<comment type="function">
    <text evidence="1">Probably involved in cement gland formation.</text>
</comment>
<comment type="subcellular location">
    <subcellularLocation>
        <location evidence="2 3">Secreted</location>
    </subcellularLocation>
</comment>
<comment type="similarity">
    <text evidence="2">Belongs to the AGR family.</text>
</comment>
<sequence length="187" mass="20885">MQTGLSLVCLVLLCSALGEAALRKTKKQAVVTDTGNSAKSDPEPVPIKTKGLKTLDRGWGEEIEWVQTYEEGLAKARENNKPLMVIHHLEDCPYSIALKKAFVADRLAQKLAREDFIMLNLVHPVADENQAPDGHYVPRVIFVDPSLTVRSDLKGRYGNKMYAYDADDIPELVTNMKKAKSYLKTEL</sequence>
<proteinExistence type="evidence at transcript level"/>
<keyword id="KW-1185">Reference proteome</keyword>
<keyword id="KW-0964">Secreted</keyword>
<keyword id="KW-0732">Signal</keyword>
<dbReference type="EMBL" id="BC067924">
    <property type="protein sequence ID" value="AAH67924.1"/>
    <property type="molecule type" value="mRNA"/>
</dbReference>
<dbReference type="RefSeq" id="NP_998864.1">
    <property type="nucleotide sequence ID" value="NM_213699.1"/>
</dbReference>
<dbReference type="SMR" id="Q6NVS9"/>
<dbReference type="STRING" id="8364.ENSXETP00000052229"/>
<dbReference type="PaxDb" id="8364-ENSXETP00000062478"/>
<dbReference type="DNASU" id="407906"/>
<dbReference type="GeneID" id="407906"/>
<dbReference type="KEGG" id="xtr:407906"/>
<dbReference type="AGR" id="Xenbase:XB-GENE-5866013"/>
<dbReference type="CTD" id="407906"/>
<dbReference type="Xenbase" id="XB-GENE-5866013">
    <property type="gene designation" value="ag1"/>
</dbReference>
<dbReference type="eggNOG" id="ENOG502R72A">
    <property type="taxonomic scope" value="Eukaryota"/>
</dbReference>
<dbReference type="InParanoid" id="Q6NVS9"/>
<dbReference type="OMA" id="VIHHKED"/>
<dbReference type="OrthoDB" id="262308at2759"/>
<dbReference type="Proteomes" id="UP000008143">
    <property type="component" value="Chromosome 9"/>
</dbReference>
<dbReference type="Bgee" id="ENSXETG00000004878">
    <property type="expression patterns" value="Expressed in neurula embryo and 13 other cell types or tissues"/>
</dbReference>
<dbReference type="ExpressionAtlas" id="Q6NVS9">
    <property type="expression patterns" value="baseline"/>
</dbReference>
<dbReference type="GO" id="GO:0005576">
    <property type="term" value="C:extracellular region"/>
    <property type="evidence" value="ECO:0000250"/>
    <property type="project" value="UniProtKB"/>
</dbReference>
<dbReference type="FunFam" id="3.40.30.10:FF:000036">
    <property type="entry name" value="anterior gradient protein 2 homolog"/>
    <property type="match status" value="1"/>
</dbReference>
<dbReference type="Gene3D" id="3.40.30.10">
    <property type="entry name" value="Glutaredoxin"/>
    <property type="match status" value="1"/>
</dbReference>
<dbReference type="InterPro" id="IPR051099">
    <property type="entry name" value="AGR/TXD"/>
</dbReference>
<dbReference type="InterPro" id="IPR036249">
    <property type="entry name" value="Thioredoxin-like_sf"/>
</dbReference>
<dbReference type="PANTHER" id="PTHR15337:SF24">
    <property type="entry name" value="ANTERIOR GRADIENT PROTEIN 1"/>
    <property type="match status" value="1"/>
</dbReference>
<dbReference type="PANTHER" id="PTHR15337">
    <property type="entry name" value="ANTERIOR GRADIENT PROTEIN-RELATED"/>
    <property type="match status" value="1"/>
</dbReference>
<dbReference type="Pfam" id="PF13899">
    <property type="entry name" value="Thioredoxin_7"/>
    <property type="match status" value="1"/>
</dbReference>
<dbReference type="SUPFAM" id="SSF52833">
    <property type="entry name" value="Thioredoxin-like"/>
    <property type="match status" value="1"/>
</dbReference>
<name>AG1_XENTR</name>
<evidence type="ECO:0000250" key="1">
    <source>
        <dbReference type="UniProtKB" id="P55869"/>
    </source>
</evidence>
<evidence type="ECO:0000255" key="2"/>
<evidence type="ECO:0000305" key="3"/>
<evidence type="ECO:0000312" key="4">
    <source>
        <dbReference type="EMBL" id="AAH67924.1"/>
    </source>
</evidence>
<accession>Q6NVS9</accession>
<organism>
    <name type="scientific">Xenopus tropicalis</name>
    <name type="common">Western clawed frog</name>
    <name type="synonym">Silurana tropicalis</name>
    <dbReference type="NCBI Taxonomy" id="8364"/>
    <lineage>
        <taxon>Eukaryota</taxon>
        <taxon>Metazoa</taxon>
        <taxon>Chordata</taxon>
        <taxon>Craniata</taxon>
        <taxon>Vertebrata</taxon>
        <taxon>Euteleostomi</taxon>
        <taxon>Amphibia</taxon>
        <taxon>Batrachia</taxon>
        <taxon>Anura</taxon>
        <taxon>Pipoidea</taxon>
        <taxon>Pipidae</taxon>
        <taxon>Xenopodinae</taxon>
        <taxon>Xenopus</taxon>
        <taxon>Silurana</taxon>
    </lineage>
</organism>
<gene>
    <name type="primary">ag1</name>
</gene>
<reference evidence="4" key="1">
    <citation type="submission" date="2004-03" db="EMBL/GenBank/DDBJ databases">
        <authorList>
            <consortium name="NIH - Xenopus Gene Collection (XGC) project"/>
        </authorList>
    </citation>
    <scope>NUCLEOTIDE SEQUENCE [LARGE SCALE MRNA]</scope>
    <source>
        <tissue evidence="4">Gastrula</tissue>
    </source>
</reference>